<accession>P08299</accession>
<organism>
    <name type="scientific">Nicotiana tabacum</name>
    <name type="common">Common tobacco</name>
    <dbReference type="NCBI Taxonomy" id="4097"/>
    <lineage>
        <taxon>Eukaryota</taxon>
        <taxon>Viridiplantae</taxon>
        <taxon>Streptophyta</taxon>
        <taxon>Embryophyta</taxon>
        <taxon>Tracheophyta</taxon>
        <taxon>Spermatophyta</taxon>
        <taxon>Magnoliopsida</taxon>
        <taxon>eudicotyledons</taxon>
        <taxon>Gunneridae</taxon>
        <taxon>Pentapetalae</taxon>
        <taxon>asterids</taxon>
        <taxon>lamiids</taxon>
        <taxon>Solanales</taxon>
        <taxon>Solanaceae</taxon>
        <taxon>Nicotianoideae</taxon>
        <taxon>Nicotianeae</taxon>
        <taxon>Nicotiana</taxon>
    </lineage>
</organism>
<keyword id="KW-0903">Direct protein sequencing</keyword>
<keyword id="KW-1015">Disulfide bond</keyword>
<keyword id="KW-0568">Pathogenesis-related protein</keyword>
<keyword id="KW-0611">Plant defense</keyword>
<keyword id="KW-1185">Reference proteome</keyword>
<keyword id="KW-0732">Signal</keyword>
<keyword id="KW-0926">Vacuole</keyword>
<sequence>MGFVLFSQLPSFLLVSTLLLFLVISHSCRAQNSQQDYLDAHNTARADVGVEPLTWDDQVAAYAQNYASQLAADCNLVHSHGQYGENLAEGSGDFMTAAKAVEMWVDEKQYYDHDSNTCAQGQVCGHYTQVVWRNSVRVGCARVQCNNGGYVVSCNYDPPGNYRGESPY</sequence>
<dbReference type="EMBL" id="X05959">
    <property type="protein sequence ID" value="CAA29392.1"/>
    <property type="molecule type" value="Genomic_DNA"/>
</dbReference>
<dbReference type="EMBL" id="X06361">
    <property type="protein sequence ID" value="CAA29660.1"/>
    <property type="molecule type" value="Genomic_DNA"/>
</dbReference>
<dbReference type="EMBL" id="X12485">
    <property type="protein sequence ID" value="CAA31008.1"/>
    <property type="molecule type" value="mRNA"/>
</dbReference>
<dbReference type="EMBL" id="X06930">
    <property type="protein sequence ID" value="CAA30017.1"/>
    <property type="molecule type" value="Genomic_DNA"/>
</dbReference>
<dbReference type="PIR" id="A05264">
    <property type="entry name" value="A05264"/>
</dbReference>
<dbReference type="PIR" id="A24620">
    <property type="entry name" value="A24620"/>
</dbReference>
<dbReference type="SMR" id="P08299"/>
<dbReference type="STRING" id="4097.P08299"/>
<dbReference type="PaxDb" id="4097-P08299"/>
<dbReference type="Proteomes" id="UP000084051">
    <property type="component" value="Unplaced"/>
</dbReference>
<dbReference type="GO" id="GO:0005615">
    <property type="term" value="C:extracellular space"/>
    <property type="evidence" value="ECO:0000318"/>
    <property type="project" value="GO_Central"/>
</dbReference>
<dbReference type="GO" id="GO:0005773">
    <property type="term" value="C:vacuole"/>
    <property type="evidence" value="ECO:0007669"/>
    <property type="project" value="UniProtKB-SubCell"/>
</dbReference>
<dbReference type="GO" id="GO:0006952">
    <property type="term" value="P:defense response"/>
    <property type="evidence" value="ECO:0007669"/>
    <property type="project" value="UniProtKB-KW"/>
</dbReference>
<dbReference type="GO" id="GO:0019953">
    <property type="term" value="P:sexual reproduction"/>
    <property type="evidence" value="ECO:0000318"/>
    <property type="project" value="GO_Central"/>
</dbReference>
<dbReference type="CDD" id="cd05381">
    <property type="entry name" value="CAP_PR-1"/>
    <property type="match status" value="1"/>
</dbReference>
<dbReference type="FunFam" id="3.40.33.10:FF:000006">
    <property type="entry name" value="Putative pathogenesis-related protein 1"/>
    <property type="match status" value="1"/>
</dbReference>
<dbReference type="Gene3D" id="3.40.33.10">
    <property type="entry name" value="CAP"/>
    <property type="match status" value="1"/>
</dbReference>
<dbReference type="InterPro" id="IPR018244">
    <property type="entry name" value="Allrgn_V5/Tpx1_CS"/>
</dbReference>
<dbReference type="InterPro" id="IPR014044">
    <property type="entry name" value="CAP_dom"/>
</dbReference>
<dbReference type="InterPro" id="IPR035940">
    <property type="entry name" value="CAP_sf"/>
</dbReference>
<dbReference type="InterPro" id="IPR001283">
    <property type="entry name" value="CRISP-related"/>
</dbReference>
<dbReference type="InterPro" id="IPR002413">
    <property type="entry name" value="V5_allergen-like"/>
</dbReference>
<dbReference type="PANTHER" id="PTHR10334">
    <property type="entry name" value="CYSTEINE-RICH SECRETORY PROTEIN-RELATED"/>
    <property type="match status" value="1"/>
</dbReference>
<dbReference type="Pfam" id="PF00188">
    <property type="entry name" value="CAP"/>
    <property type="match status" value="1"/>
</dbReference>
<dbReference type="PRINTS" id="PR00838">
    <property type="entry name" value="V5ALLERGEN"/>
</dbReference>
<dbReference type="PRINTS" id="PR00837">
    <property type="entry name" value="V5TPXLIKE"/>
</dbReference>
<dbReference type="SMART" id="SM00198">
    <property type="entry name" value="SCP"/>
    <property type="match status" value="1"/>
</dbReference>
<dbReference type="SUPFAM" id="SSF55797">
    <property type="entry name" value="PR-1-like"/>
    <property type="match status" value="1"/>
</dbReference>
<dbReference type="PROSITE" id="PS01009">
    <property type="entry name" value="CRISP_1"/>
    <property type="match status" value="1"/>
</dbReference>
<dbReference type="PROSITE" id="PS01010">
    <property type="entry name" value="CRISP_2"/>
    <property type="match status" value="1"/>
</dbReference>
<evidence type="ECO:0000250" key="1"/>
<evidence type="ECO:0000269" key="2">
    <source>
    </source>
</evidence>
<evidence type="ECO:0000269" key="3">
    <source>
    </source>
</evidence>
<evidence type="ECO:0000305" key="4"/>
<name>PR1A_TOBAC</name>
<protein>
    <recommendedName>
        <fullName>Pathogenesis-related protein 1A</fullName>
        <shortName>PR-1A</shortName>
    </recommendedName>
</protein>
<reference key="1">
    <citation type="journal article" date="1987" name="Nucleic Acids Res.">
        <title>Structure of tobacco genes encoding pathogenesis-related proteins from the PR-1 group.</title>
        <authorList>
            <person name="Cornelissen B.J.C."/>
            <person name="Horowitz J."/>
            <person name="van Kan J.A.L."/>
            <person name="Goldberg R.B."/>
            <person name="Bol J.F."/>
        </authorList>
    </citation>
    <scope>NUCLEOTIDE SEQUENCE [GENOMIC DNA]</scope>
    <source>
        <strain>cv. Samsun NN</strain>
    </source>
</reference>
<reference key="2">
    <citation type="journal article" date="1987" name="FEBS Lett.">
        <title>Nucleotide sequence of the PR-1 gene of Nicotiana tabacum.</title>
        <authorList>
            <person name="Ohshima M."/>
            <person name="Matsuoka M."/>
            <person name="Yamamoto N."/>
            <person name="Tanaka Y."/>
            <person name="Kano-Murakami Y."/>
            <person name="Ozeki Y."/>
            <person name="Kato A."/>
            <person name="Harada N."/>
            <person name="Ohashi Y."/>
        </authorList>
    </citation>
    <scope>NUCLEOTIDE SEQUENCE [GENOMIC DNA]</scope>
    <source>
        <strain>cv. Samsun NN</strain>
    </source>
</reference>
<reference key="3">
    <citation type="journal article" date="1988" name="Mol. Gen. Genet.">
        <title>DNA sequence analysis of a PR-1a gene from tobacco: molecular relationship of heat shock and pathogen responses in plants.</title>
        <authorList>
            <person name="Pfitzner U.M."/>
            <person name="Pfitzner A.J.P."/>
            <person name="Goodman H.M."/>
        </authorList>
    </citation>
    <scope>NUCLEOTIDE SEQUENCE [GENOMIC DNA]</scope>
    <source>
        <strain>cv. Wisconsin 38</strain>
    </source>
</reference>
<reference key="4">
    <citation type="journal article" date="1988" name="Nucleic Acids Res.">
        <title>Isolation and nucleotide sequence of cDNA clones for the pathogenesis-related proteins PR1a, PR1b and PR1c of Nicotiana tabacum cv. Xanthi nc induced by TMV infection.</title>
        <authorList>
            <person name="Cutt J.R."/>
            <person name="Dixon D.D."/>
            <person name="Carr J.P."/>
            <person name="Klessig D.F."/>
        </authorList>
    </citation>
    <scope>NUCLEOTIDE SEQUENCE [MRNA] OF 4-168</scope>
    <source>
        <strain>cv. Xanthi</strain>
    </source>
</reference>
<reference key="5">
    <citation type="journal article" date="1985" name="EMBO J.">
        <title>Amino acid sequence of the 'pathogenesis-related' leaf protein p14 from viroid-infected tomato reveals a new type of structurally unfamiliar proteins.</title>
        <authorList>
            <person name="Lucas J."/>
            <person name="Camacho-Henriquez A."/>
            <person name="Lottspeich F."/>
            <person name="Henschen A."/>
            <person name="Sanger H.L."/>
        </authorList>
    </citation>
    <scope>PROTEIN SEQUENCE OF 31-70; 103-131 AND 157-168</scope>
</reference>
<reference key="6">
    <citation type="journal article" date="1991" name="EMBO J.">
        <title>Differential targeting of the tobacco PR-1 pathogenesis-related proteins to the extracellular space and vacuoles of crystal idioblasts.</title>
        <authorList>
            <person name="Dixon D.C."/>
            <person name="Cutt J.R."/>
            <person name="Klessig D.F."/>
        </authorList>
    </citation>
    <scope>SUBCELLULAR LOCATION</scope>
</reference>
<feature type="signal peptide" evidence="2">
    <location>
        <begin position="1"/>
        <end position="30"/>
    </location>
</feature>
<feature type="chain" id="PRO_0000006300" description="Pathogenesis-related protein 1A">
    <location>
        <begin position="31"/>
        <end position="168"/>
    </location>
</feature>
<feature type="domain" description="SCP">
    <location>
        <begin position="38"/>
        <end position="156"/>
    </location>
</feature>
<feature type="sequence conflict" description="In Ref. 4; CAA31008." evidence="4" ref="4">
    <original>LF</original>
    <variation>VS</variation>
    <location>
        <begin position="5"/>
        <end position="6"/>
    </location>
</feature>
<feature type="sequence conflict" description="In Ref. 5; AA sequence." evidence="4" ref="5">
    <original>D</original>
    <variation>S</variation>
    <location>
        <position position="57"/>
    </location>
</feature>
<feature type="sequence conflict" description="In Ref. 5; AA sequence." evidence="4" ref="5">
    <original>SQ</original>
    <variation>PS</variation>
    <location>
        <begin position="68"/>
        <end position="69"/>
    </location>
</feature>
<feature type="sequence conflict" description="In Ref. 3; CAA30017." evidence="4" ref="3">
    <original>D</original>
    <variation>N</variation>
    <location>
        <position position="106"/>
    </location>
</feature>
<feature type="sequence conflict" description="In Ref. 3; CAA30017." evidence="4" ref="3">
    <original>S</original>
    <variation>T</variation>
    <location>
        <position position="153"/>
    </location>
</feature>
<feature type="sequence conflict" description="In Ref. 5; AA sequence." evidence="4" ref="5">
    <original>Y</original>
    <variation>W</variation>
    <location>
        <position position="162"/>
    </location>
</feature>
<proteinExistence type="evidence at protein level"/>
<comment type="function">
    <text>Probably involved in the defense reaction of plants against pathogens.</text>
</comment>
<comment type="subcellular location">
    <subcellularLocation>
        <location evidence="3">Vacuole</location>
    </subcellularLocation>
    <text>Accumulates in within the vacuoles of specialized cells known as crystal idioblasts.</text>
</comment>
<comment type="induction">
    <text>Synthesized during pathogen infection or other stress-related responses.</text>
</comment>
<comment type="PTM">
    <text evidence="1">Three disulfide bonds are present.</text>
</comment>
<comment type="similarity">
    <text evidence="4">Belongs to the CRISP family.</text>
</comment>